<proteinExistence type="evidence at protein level"/>
<dbReference type="EMBL" id="AF225420">
    <property type="protein sequence ID" value="AAG09722.1"/>
    <property type="molecule type" value="mRNA"/>
</dbReference>
<dbReference type="EMBL" id="AF220050">
    <property type="protein sequence ID" value="AAF67643.1"/>
    <property type="molecule type" value="mRNA"/>
</dbReference>
<dbReference type="EMBL" id="AK027594">
    <property type="protein sequence ID" value="BAB55219.1"/>
    <property type="molecule type" value="mRNA"/>
</dbReference>
<dbReference type="EMBL" id="AK312736">
    <property type="protein sequence ID" value="BAG35607.1"/>
    <property type="molecule type" value="mRNA"/>
</dbReference>
<dbReference type="EMBL" id="AL135786">
    <property type="status" value="NOT_ANNOTATED_CDS"/>
    <property type="molecule type" value="Genomic_DNA"/>
</dbReference>
<dbReference type="EMBL" id="CH471071">
    <property type="protein sequence ID" value="EAW58765.1"/>
    <property type="molecule type" value="Genomic_DNA"/>
</dbReference>
<dbReference type="EMBL" id="BC008212">
    <property type="protein sequence ID" value="AAH08212.1"/>
    <property type="molecule type" value="mRNA"/>
</dbReference>
<dbReference type="CCDS" id="CCDS6463.1"/>
<dbReference type="RefSeq" id="NP_060935.2">
    <property type="nucleotide sequence ID" value="NM_018465.4"/>
</dbReference>
<dbReference type="RefSeq" id="XP_005251567.1">
    <property type="nucleotide sequence ID" value="XM_005251510.6"/>
</dbReference>
<dbReference type="RefSeq" id="XP_011516262.1">
    <property type="nucleotide sequence ID" value="XM_011517960.3"/>
</dbReference>
<dbReference type="RefSeq" id="XP_054219256.1">
    <property type="nucleotide sequence ID" value="XM_054363281.1"/>
</dbReference>
<dbReference type="RefSeq" id="XP_054219257.1">
    <property type="nucleotide sequence ID" value="XM_054363282.1"/>
</dbReference>
<dbReference type="BioGRID" id="120950">
    <property type="interactions" value="83"/>
</dbReference>
<dbReference type="FunCoup" id="Q9HBL7">
    <property type="interactions" value="253"/>
</dbReference>
<dbReference type="IntAct" id="Q9HBL7">
    <property type="interactions" value="154"/>
</dbReference>
<dbReference type="MINT" id="Q9HBL7"/>
<dbReference type="STRING" id="9606.ENSP00000223864"/>
<dbReference type="GlyGen" id="Q9HBL7">
    <property type="glycosylation" value="1 site, 1 O-linked glycan (1 site)"/>
</dbReference>
<dbReference type="iPTMnet" id="Q9HBL7"/>
<dbReference type="PhosphoSitePlus" id="Q9HBL7"/>
<dbReference type="SwissPalm" id="Q9HBL7"/>
<dbReference type="BioMuta" id="PLGRKT"/>
<dbReference type="DMDM" id="68565305"/>
<dbReference type="jPOST" id="Q9HBL7"/>
<dbReference type="MassIVE" id="Q9HBL7"/>
<dbReference type="PaxDb" id="9606-ENSP00000223864"/>
<dbReference type="PeptideAtlas" id="Q9HBL7"/>
<dbReference type="ProteomicsDB" id="81571"/>
<dbReference type="Pumba" id="Q9HBL7"/>
<dbReference type="TopDownProteomics" id="Q9HBL7"/>
<dbReference type="Antibodypedia" id="2322">
    <property type="antibodies" value="106 antibodies from 23 providers"/>
</dbReference>
<dbReference type="DNASU" id="55848"/>
<dbReference type="Ensembl" id="ENST00000223864.7">
    <property type="protein sequence ID" value="ENSP00000223864.2"/>
    <property type="gene ID" value="ENSG00000107020.10"/>
</dbReference>
<dbReference type="GeneID" id="55848"/>
<dbReference type="KEGG" id="hsa:55848"/>
<dbReference type="MANE-Select" id="ENST00000223864.7">
    <property type="protein sequence ID" value="ENSP00000223864.2"/>
    <property type="RefSeq nucleotide sequence ID" value="NM_018465.4"/>
    <property type="RefSeq protein sequence ID" value="NP_060935.2"/>
</dbReference>
<dbReference type="UCSC" id="uc003zjc.5">
    <property type="organism name" value="human"/>
</dbReference>
<dbReference type="AGR" id="HGNC:23633"/>
<dbReference type="CTD" id="55848"/>
<dbReference type="DisGeNET" id="55848"/>
<dbReference type="GeneCards" id="PLGRKT"/>
<dbReference type="HGNC" id="HGNC:23633">
    <property type="gene designation" value="PLGRKT"/>
</dbReference>
<dbReference type="HPA" id="ENSG00000107020">
    <property type="expression patterns" value="Low tissue specificity"/>
</dbReference>
<dbReference type="MIM" id="618444">
    <property type="type" value="gene"/>
</dbReference>
<dbReference type="neXtProt" id="NX_Q9HBL7"/>
<dbReference type="OpenTargets" id="ENSG00000107020"/>
<dbReference type="PharmGKB" id="PA134964114"/>
<dbReference type="VEuPathDB" id="HostDB:ENSG00000107020"/>
<dbReference type="eggNOG" id="KOG4544">
    <property type="taxonomic scope" value="Eukaryota"/>
</dbReference>
<dbReference type="GeneTree" id="ENSGT00390000000375"/>
<dbReference type="HOGENOM" id="CLU_115107_1_0_1"/>
<dbReference type="InParanoid" id="Q9HBL7"/>
<dbReference type="OMA" id="MGYYTDW"/>
<dbReference type="OrthoDB" id="10256697at2759"/>
<dbReference type="PAN-GO" id="Q9HBL7">
    <property type="GO annotations" value="1 GO annotation based on evolutionary models"/>
</dbReference>
<dbReference type="PhylomeDB" id="Q9HBL7"/>
<dbReference type="TreeFam" id="TF314698"/>
<dbReference type="PathwayCommons" id="Q9HBL7"/>
<dbReference type="SignaLink" id="Q9HBL7"/>
<dbReference type="BioGRID-ORCS" id="55848">
    <property type="hits" value="10 hits in 1153 CRISPR screens"/>
</dbReference>
<dbReference type="CD-CODE" id="FB4E32DD">
    <property type="entry name" value="Presynaptic clusters and postsynaptic densities"/>
</dbReference>
<dbReference type="ChiTaRS" id="PLGRKT">
    <property type="organism name" value="human"/>
</dbReference>
<dbReference type="GenomeRNAi" id="55848"/>
<dbReference type="Pharos" id="Q9HBL7">
    <property type="development level" value="Tbio"/>
</dbReference>
<dbReference type="PRO" id="PR:Q9HBL7"/>
<dbReference type="Proteomes" id="UP000005640">
    <property type="component" value="Chromosome 9"/>
</dbReference>
<dbReference type="RNAct" id="Q9HBL7">
    <property type="molecule type" value="protein"/>
</dbReference>
<dbReference type="Bgee" id="ENSG00000107020">
    <property type="expression patterns" value="Expressed in rectum and 164 other cell types or tissues"/>
</dbReference>
<dbReference type="GO" id="GO:0005739">
    <property type="term" value="C:mitochondrion"/>
    <property type="evidence" value="ECO:0006056"/>
    <property type="project" value="FlyBase"/>
</dbReference>
<dbReference type="GO" id="GO:0005886">
    <property type="term" value="C:plasma membrane"/>
    <property type="evidence" value="ECO:0007669"/>
    <property type="project" value="UniProtKB-SubCell"/>
</dbReference>
<dbReference type="GO" id="GO:0006935">
    <property type="term" value="P:chemotaxis"/>
    <property type="evidence" value="ECO:0007669"/>
    <property type="project" value="UniProtKB-KW"/>
</dbReference>
<dbReference type="GO" id="GO:0006954">
    <property type="term" value="P:inflammatory response"/>
    <property type="evidence" value="ECO:0007669"/>
    <property type="project" value="UniProtKB-KW"/>
</dbReference>
<dbReference type="GO" id="GO:0010756">
    <property type="term" value="P:positive regulation of plasminogen activation"/>
    <property type="evidence" value="ECO:0000318"/>
    <property type="project" value="GO_Central"/>
</dbReference>
<dbReference type="InterPro" id="IPR019319">
    <property type="entry name" value="Plg-R(KT)"/>
</dbReference>
<dbReference type="PANTHER" id="PTHR13411">
    <property type="entry name" value="PLASMINOGEN RECEPTOR (KT)"/>
    <property type="match status" value="1"/>
</dbReference>
<dbReference type="PANTHER" id="PTHR13411:SF6">
    <property type="entry name" value="PLASMINOGEN RECEPTOR (KT)"/>
    <property type="match status" value="1"/>
</dbReference>
<dbReference type="Pfam" id="PF10166">
    <property type="entry name" value="DUF2368"/>
    <property type="match status" value="1"/>
</dbReference>
<comment type="function">
    <text evidence="4">Receptor for plasminogen. Regulates urokinase plasminogen activator-dependent and stimulates tissue-type plasminogen activator-dependent cell surface plasminogen activation. Proposed to be part of a local catecholaminergic cell plasminogen activation system that regulates neuroendocrine prohormone processing. Involved in regulation of inflammatory response; regulates monocyte chemotactic migration and matrix metalloproteinase activation, such as of MMP2 and MMP9.</text>
</comment>
<comment type="subunit">
    <text evidence="1">Interacts with PLAT and PLAUR.</text>
</comment>
<comment type="interaction">
    <interactant intactId="EBI-714824">
        <id>Q9HBL7</id>
    </interactant>
    <interactant intactId="EBI-10177695">
        <id>P26641-2</id>
        <label>EEF1G</label>
    </interactant>
    <organismsDiffer>false</organismsDiffer>
    <experiments>3</experiments>
</comment>
<comment type="subcellular location">
    <subcellularLocation>
        <location evidence="4">Cell membrane</location>
        <topology evidence="4">Multi-pass membrane protein</topology>
    </subcellularLocation>
    <text evidence="1">Colocalizes on the cell surface with urokinase plasminogen activator surface receptor/PLAUR.</text>
</comment>
<comment type="tissue specificity">
    <text evidence="3 4">Expressed in peripheral blood cells and monocytes. Expressed in adrenal medulla.</text>
</comment>
<gene>
    <name type="primary">PLGRKT</name>
    <name type="synonym">C9orf46</name>
    <name type="ORF">AD025</name>
    <name type="ORF">MDS030</name>
</gene>
<feature type="chain" id="PRO_0000089695" description="Plasminogen receptor (KT)">
    <location>
        <begin position="1"/>
        <end position="147"/>
    </location>
</feature>
<feature type="topological domain" description="Extracellular" evidence="2">
    <location>
        <begin position="1"/>
        <end position="52"/>
    </location>
</feature>
<feature type="transmembrane region" description="Helical" evidence="2">
    <location>
        <begin position="53"/>
        <end position="73"/>
    </location>
</feature>
<feature type="topological domain" description="Cytoplasmic" evidence="2">
    <location>
        <begin position="74"/>
        <end position="78"/>
    </location>
</feature>
<feature type="transmembrane region" description="Helical" evidence="2">
    <location>
        <begin position="79"/>
        <end position="99"/>
    </location>
</feature>
<feature type="topological domain" description="Extracellular" evidence="2">
    <location>
        <begin position="100"/>
        <end position="147"/>
    </location>
</feature>
<feature type="sequence conflict" description="In Ref. 2; AAF67643." evidence="5" ref="2">
    <original>Q</original>
    <variation>R</variation>
    <location>
        <position position="46"/>
    </location>
</feature>
<keyword id="KW-1003">Cell membrane</keyword>
<keyword id="KW-0145">Chemotaxis</keyword>
<keyword id="KW-0395">Inflammatory response</keyword>
<keyword id="KW-0472">Membrane</keyword>
<keyword id="KW-0617">Plasminogen activation</keyword>
<keyword id="KW-1267">Proteomics identification</keyword>
<keyword id="KW-1185">Reference proteome</keyword>
<keyword id="KW-0812">Transmembrane</keyword>
<keyword id="KW-1133">Transmembrane helix</keyword>
<name>PLRKT_HUMAN</name>
<reference key="1">
    <citation type="journal article" date="2000" name="Proc. Natl. Acad. Sci. U.S.A.">
        <title>Gene expression profiling in the human hypothalamus-pituitary-adrenal axis and full-length cDNA cloning.</title>
        <authorList>
            <person name="Hu R.-M."/>
            <person name="Han Z.-G."/>
            <person name="Song H.-D."/>
            <person name="Peng Y.-D."/>
            <person name="Huang Q.-H."/>
            <person name="Ren S.-X."/>
            <person name="Gu Y.-J."/>
            <person name="Huang C.-H."/>
            <person name="Li Y.-B."/>
            <person name="Jiang C.-L."/>
            <person name="Fu G."/>
            <person name="Zhang Q.-H."/>
            <person name="Gu B.-W."/>
            <person name="Dai M."/>
            <person name="Mao Y.-F."/>
            <person name="Gao G.-F."/>
            <person name="Rong R."/>
            <person name="Ye M."/>
            <person name="Zhou J."/>
            <person name="Xu S.-H."/>
            <person name="Gu J."/>
            <person name="Shi J.-X."/>
            <person name="Jin W.-R."/>
            <person name="Zhang C.-K."/>
            <person name="Wu T.-M."/>
            <person name="Huang G.-Y."/>
            <person name="Chen Z."/>
            <person name="Chen M.-D."/>
            <person name="Chen J.-L."/>
        </authorList>
    </citation>
    <scope>NUCLEOTIDE SEQUENCE [LARGE SCALE MRNA]</scope>
    <source>
        <tissue>Adrenal gland</tissue>
    </source>
</reference>
<reference key="2">
    <citation type="submission" date="1999-12" db="EMBL/GenBank/DDBJ databases">
        <title>Novel genes expressed in hematopoietic stem/progenitor cells from myelodysplastic syndrome patients.</title>
        <authorList>
            <person name="Zhao M."/>
            <person name="Gu J."/>
            <person name="Li N."/>
            <person name="Peng Y."/>
            <person name="Han Z."/>
            <person name="Chen Z."/>
        </authorList>
    </citation>
    <scope>NUCLEOTIDE SEQUENCE [LARGE SCALE MRNA]</scope>
    <source>
        <tissue>Hematopoietic stem cell</tissue>
    </source>
</reference>
<reference key="3">
    <citation type="journal article" date="2004" name="Nat. Genet.">
        <title>Complete sequencing and characterization of 21,243 full-length human cDNAs.</title>
        <authorList>
            <person name="Ota T."/>
            <person name="Suzuki Y."/>
            <person name="Nishikawa T."/>
            <person name="Otsuki T."/>
            <person name="Sugiyama T."/>
            <person name="Irie R."/>
            <person name="Wakamatsu A."/>
            <person name="Hayashi K."/>
            <person name="Sato H."/>
            <person name="Nagai K."/>
            <person name="Kimura K."/>
            <person name="Makita H."/>
            <person name="Sekine M."/>
            <person name="Obayashi M."/>
            <person name="Nishi T."/>
            <person name="Shibahara T."/>
            <person name="Tanaka T."/>
            <person name="Ishii S."/>
            <person name="Yamamoto J."/>
            <person name="Saito K."/>
            <person name="Kawai Y."/>
            <person name="Isono Y."/>
            <person name="Nakamura Y."/>
            <person name="Nagahari K."/>
            <person name="Murakami K."/>
            <person name="Yasuda T."/>
            <person name="Iwayanagi T."/>
            <person name="Wagatsuma M."/>
            <person name="Shiratori A."/>
            <person name="Sudo H."/>
            <person name="Hosoiri T."/>
            <person name="Kaku Y."/>
            <person name="Kodaira H."/>
            <person name="Kondo H."/>
            <person name="Sugawara M."/>
            <person name="Takahashi M."/>
            <person name="Kanda K."/>
            <person name="Yokoi T."/>
            <person name="Furuya T."/>
            <person name="Kikkawa E."/>
            <person name="Omura Y."/>
            <person name="Abe K."/>
            <person name="Kamihara K."/>
            <person name="Katsuta N."/>
            <person name="Sato K."/>
            <person name="Tanikawa M."/>
            <person name="Yamazaki M."/>
            <person name="Ninomiya K."/>
            <person name="Ishibashi T."/>
            <person name="Yamashita H."/>
            <person name="Murakawa K."/>
            <person name="Fujimori K."/>
            <person name="Tanai H."/>
            <person name="Kimata M."/>
            <person name="Watanabe M."/>
            <person name="Hiraoka S."/>
            <person name="Chiba Y."/>
            <person name="Ishida S."/>
            <person name="Ono Y."/>
            <person name="Takiguchi S."/>
            <person name="Watanabe S."/>
            <person name="Yosida M."/>
            <person name="Hotuta T."/>
            <person name="Kusano J."/>
            <person name="Kanehori K."/>
            <person name="Takahashi-Fujii A."/>
            <person name="Hara H."/>
            <person name="Tanase T.-O."/>
            <person name="Nomura Y."/>
            <person name="Togiya S."/>
            <person name="Komai F."/>
            <person name="Hara R."/>
            <person name="Takeuchi K."/>
            <person name="Arita M."/>
            <person name="Imose N."/>
            <person name="Musashino K."/>
            <person name="Yuuki H."/>
            <person name="Oshima A."/>
            <person name="Sasaki N."/>
            <person name="Aotsuka S."/>
            <person name="Yoshikawa Y."/>
            <person name="Matsunawa H."/>
            <person name="Ichihara T."/>
            <person name="Shiohata N."/>
            <person name="Sano S."/>
            <person name="Moriya S."/>
            <person name="Momiyama H."/>
            <person name="Satoh N."/>
            <person name="Takami S."/>
            <person name="Terashima Y."/>
            <person name="Suzuki O."/>
            <person name="Nakagawa S."/>
            <person name="Senoh A."/>
            <person name="Mizoguchi H."/>
            <person name="Goto Y."/>
            <person name="Shimizu F."/>
            <person name="Wakebe H."/>
            <person name="Hishigaki H."/>
            <person name="Watanabe T."/>
            <person name="Sugiyama A."/>
            <person name="Takemoto M."/>
            <person name="Kawakami B."/>
            <person name="Yamazaki M."/>
            <person name="Watanabe K."/>
            <person name="Kumagai A."/>
            <person name="Itakura S."/>
            <person name="Fukuzumi Y."/>
            <person name="Fujimori Y."/>
            <person name="Komiyama M."/>
            <person name="Tashiro H."/>
            <person name="Tanigami A."/>
            <person name="Fujiwara T."/>
            <person name="Ono T."/>
            <person name="Yamada K."/>
            <person name="Fujii Y."/>
            <person name="Ozaki K."/>
            <person name="Hirao M."/>
            <person name="Ohmori Y."/>
            <person name="Kawabata A."/>
            <person name="Hikiji T."/>
            <person name="Kobatake N."/>
            <person name="Inagaki H."/>
            <person name="Ikema Y."/>
            <person name="Okamoto S."/>
            <person name="Okitani R."/>
            <person name="Kawakami T."/>
            <person name="Noguchi S."/>
            <person name="Itoh T."/>
            <person name="Shigeta K."/>
            <person name="Senba T."/>
            <person name="Matsumura K."/>
            <person name="Nakajima Y."/>
            <person name="Mizuno T."/>
            <person name="Morinaga M."/>
            <person name="Sasaki M."/>
            <person name="Togashi T."/>
            <person name="Oyama M."/>
            <person name="Hata H."/>
            <person name="Watanabe M."/>
            <person name="Komatsu T."/>
            <person name="Mizushima-Sugano J."/>
            <person name="Satoh T."/>
            <person name="Shirai Y."/>
            <person name="Takahashi Y."/>
            <person name="Nakagawa K."/>
            <person name="Okumura K."/>
            <person name="Nagase T."/>
            <person name="Nomura N."/>
            <person name="Kikuchi H."/>
            <person name="Masuho Y."/>
            <person name="Yamashita R."/>
            <person name="Nakai K."/>
            <person name="Yada T."/>
            <person name="Nakamura Y."/>
            <person name="Ohara O."/>
            <person name="Isogai T."/>
            <person name="Sugano S."/>
        </authorList>
    </citation>
    <scope>NUCLEOTIDE SEQUENCE [LARGE SCALE MRNA]</scope>
    <source>
        <tissue>Placenta</tissue>
        <tissue>Teratocarcinoma</tissue>
    </source>
</reference>
<reference key="4">
    <citation type="journal article" date="2004" name="Nature">
        <title>DNA sequence and analysis of human chromosome 9.</title>
        <authorList>
            <person name="Humphray S.J."/>
            <person name="Oliver K."/>
            <person name="Hunt A.R."/>
            <person name="Plumb R.W."/>
            <person name="Loveland J.E."/>
            <person name="Howe K.L."/>
            <person name="Andrews T.D."/>
            <person name="Searle S."/>
            <person name="Hunt S.E."/>
            <person name="Scott C.E."/>
            <person name="Jones M.C."/>
            <person name="Ainscough R."/>
            <person name="Almeida J.P."/>
            <person name="Ambrose K.D."/>
            <person name="Ashwell R.I.S."/>
            <person name="Babbage A.K."/>
            <person name="Babbage S."/>
            <person name="Bagguley C.L."/>
            <person name="Bailey J."/>
            <person name="Banerjee R."/>
            <person name="Barker D.J."/>
            <person name="Barlow K.F."/>
            <person name="Bates K."/>
            <person name="Beasley H."/>
            <person name="Beasley O."/>
            <person name="Bird C.P."/>
            <person name="Bray-Allen S."/>
            <person name="Brown A.J."/>
            <person name="Brown J.Y."/>
            <person name="Burford D."/>
            <person name="Burrill W."/>
            <person name="Burton J."/>
            <person name="Carder C."/>
            <person name="Carter N.P."/>
            <person name="Chapman J.C."/>
            <person name="Chen Y."/>
            <person name="Clarke G."/>
            <person name="Clark S.Y."/>
            <person name="Clee C.M."/>
            <person name="Clegg S."/>
            <person name="Collier R.E."/>
            <person name="Corby N."/>
            <person name="Crosier M."/>
            <person name="Cummings A.T."/>
            <person name="Davies J."/>
            <person name="Dhami P."/>
            <person name="Dunn M."/>
            <person name="Dutta I."/>
            <person name="Dyer L.W."/>
            <person name="Earthrowl M.E."/>
            <person name="Faulkner L."/>
            <person name="Fleming C.J."/>
            <person name="Frankish A."/>
            <person name="Frankland J.A."/>
            <person name="French L."/>
            <person name="Fricker D.G."/>
            <person name="Garner P."/>
            <person name="Garnett J."/>
            <person name="Ghori J."/>
            <person name="Gilbert J.G.R."/>
            <person name="Glison C."/>
            <person name="Grafham D.V."/>
            <person name="Gribble S."/>
            <person name="Griffiths C."/>
            <person name="Griffiths-Jones S."/>
            <person name="Grocock R."/>
            <person name="Guy J."/>
            <person name="Hall R.E."/>
            <person name="Hammond S."/>
            <person name="Harley J.L."/>
            <person name="Harrison E.S.I."/>
            <person name="Hart E.A."/>
            <person name="Heath P.D."/>
            <person name="Henderson C.D."/>
            <person name="Hopkins B.L."/>
            <person name="Howard P.J."/>
            <person name="Howden P.J."/>
            <person name="Huckle E."/>
            <person name="Johnson C."/>
            <person name="Johnson D."/>
            <person name="Joy A.A."/>
            <person name="Kay M."/>
            <person name="Keenan S."/>
            <person name="Kershaw J.K."/>
            <person name="Kimberley A.M."/>
            <person name="King A."/>
            <person name="Knights A."/>
            <person name="Laird G.K."/>
            <person name="Langford C."/>
            <person name="Lawlor S."/>
            <person name="Leongamornlert D.A."/>
            <person name="Leversha M."/>
            <person name="Lloyd C."/>
            <person name="Lloyd D.M."/>
            <person name="Lovell J."/>
            <person name="Martin S."/>
            <person name="Mashreghi-Mohammadi M."/>
            <person name="Matthews L."/>
            <person name="McLaren S."/>
            <person name="McLay K.E."/>
            <person name="McMurray A."/>
            <person name="Milne S."/>
            <person name="Nickerson T."/>
            <person name="Nisbett J."/>
            <person name="Nordsiek G."/>
            <person name="Pearce A.V."/>
            <person name="Peck A.I."/>
            <person name="Porter K.M."/>
            <person name="Pandian R."/>
            <person name="Pelan S."/>
            <person name="Phillimore B."/>
            <person name="Povey S."/>
            <person name="Ramsey Y."/>
            <person name="Rand V."/>
            <person name="Scharfe M."/>
            <person name="Sehra H.K."/>
            <person name="Shownkeen R."/>
            <person name="Sims S.K."/>
            <person name="Skuce C.D."/>
            <person name="Smith M."/>
            <person name="Steward C.A."/>
            <person name="Swarbreck D."/>
            <person name="Sycamore N."/>
            <person name="Tester J."/>
            <person name="Thorpe A."/>
            <person name="Tracey A."/>
            <person name="Tromans A."/>
            <person name="Thomas D.W."/>
            <person name="Wall M."/>
            <person name="Wallis J.M."/>
            <person name="West A.P."/>
            <person name="Whitehead S.L."/>
            <person name="Willey D.L."/>
            <person name="Williams S.A."/>
            <person name="Wilming L."/>
            <person name="Wray P.W."/>
            <person name="Young L."/>
            <person name="Ashurst J.L."/>
            <person name="Coulson A."/>
            <person name="Blocker H."/>
            <person name="Durbin R.M."/>
            <person name="Sulston J.E."/>
            <person name="Hubbard T."/>
            <person name="Jackson M.J."/>
            <person name="Bentley D.R."/>
            <person name="Beck S."/>
            <person name="Rogers J."/>
            <person name="Dunham I."/>
        </authorList>
    </citation>
    <scope>NUCLEOTIDE SEQUENCE [LARGE SCALE GENOMIC DNA]</scope>
</reference>
<reference key="5">
    <citation type="submission" date="2005-09" db="EMBL/GenBank/DDBJ databases">
        <authorList>
            <person name="Mural R.J."/>
            <person name="Istrail S."/>
            <person name="Sutton G.G."/>
            <person name="Florea L."/>
            <person name="Halpern A.L."/>
            <person name="Mobarry C.M."/>
            <person name="Lippert R."/>
            <person name="Walenz B."/>
            <person name="Shatkay H."/>
            <person name="Dew I."/>
            <person name="Miller J.R."/>
            <person name="Flanigan M.J."/>
            <person name="Edwards N.J."/>
            <person name="Bolanos R."/>
            <person name="Fasulo D."/>
            <person name="Halldorsson B.V."/>
            <person name="Hannenhalli S."/>
            <person name="Turner R."/>
            <person name="Yooseph S."/>
            <person name="Lu F."/>
            <person name="Nusskern D.R."/>
            <person name="Shue B.C."/>
            <person name="Zheng X.H."/>
            <person name="Zhong F."/>
            <person name="Delcher A.L."/>
            <person name="Huson D.H."/>
            <person name="Kravitz S.A."/>
            <person name="Mouchard L."/>
            <person name="Reinert K."/>
            <person name="Remington K.A."/>
            <person name="Clark A.G."/>
            <person name="Waterman M.S."/>
            <person name="Eichler E.E."/>
            <person name="Adams M.D."/>
            <person name="Hunkapiller M.W."/>
            <person name="Myers E.W."/>
            <person name="Venter J.C."/>
        </authorList>
    </citation>
    <scope>NUCLEOTIDE SEQUENCE [LARGE SCALE GENOMIC DNA]</scope>
</reference>
<reference key="6">
    <citation type="journal article" date="2004" name="Genome Res.">
        <title>The status, quality, and expansion of the NIH full-length cDNA project: the Mammalian Gene Collection (MGC).</title>
        <authorList>
            <consortium name="The MGC Project Team"/>
        </authorList>
    </citation>
    <scope>NUCLEOTIDE SEQUENCE [LARGE SCALE MRNA]</scope>
    <source>
        <tissue>Eye</tissue>
    </source>
</reference>
<reference key="7">
    <citation type="journal article" date="2011" name="BMC Syst. Biol.">
        <title>Initial characterization of the human central proteome.</title>
        <authorList>
            <person name="Burkard T.R."/>
            <person name="Planyavsky M."/>
            <person name="Kaupe I."/>
            <person name="Breitwieser F.P."/>
            <person name="Buerckstuemmer T."/>
            <person name="Bennett K.L."/>
            <person name="Superti-Furga G."/>
            <person name="Colinge J."/>
        </authorList>
    </citation>
    <scope>IDENTIFICATION BY MASS SPECTROMETRY [LARGE SCALE ANALYSIS]</scope>
</reference>
<reference key="8">
    <citation type="journal article" date="2011" name="Blood">
        <title>Regulation of macrophage migration by a novel plasminogen receptor Plg-R KT.</title>
        <authorList>
            <person name="Lighvani S."/>
            <person name="Baik N."/>
            <person name="Diggs J.E."/>
            <person name="Khaldoyanidi S."/>
            <person name="Parmer R.J."/>
            <person name="Miles L.A."/>
        </authorList>
    </citation>
    <scope>FUNCTION IN INFLAMMATORY RESPONSE</scope>
    <scope>SUBCELLULAR LOCATION</scope>
    <scope>TISSUE SPECIFICITY</scope>
</reference>
<reference key="9">
    <citation type="journal article" date="2011" name="J. Biol. Chem.">
        <title>The novel plasminogen receptor, plasminogen receptor(KT) (Plg-R(KT)), regulates catecholamine release.</title>
        <authorList>
            <person name="Bai H."/>
            <person name="Baik N."/>
            <person name="Kiosses W.B."/>
            <person name="Krajewski S."/>
            <person name="Miles L.A."/>
            <person name="Parmer R.J."/>
        </authorList>
    </citation>
    <scope>TISSUE SPECIFICITY</scope>
</reference>
<reference key="10">
    <citation type="journal article" date="2015" name="Proteomics">
        <title>N-terminome analysis of the human mitochondrial proteome.</title>
        <authorList>
            <person name="Vaca Jacome A.S."/>
            <person name="Rabilloud T."/>
            <person name="Schaeffer-Reiss C."/>
            <person name="Rompais M."/>
            <person name="Ayoub D."/>
            <person name="Lane L."/>
            <person name="Bairoch A."/>
            <person name="Van Dorsselaer A."/>
            <person name="Carapito C."/>
        </authorList>
    </citation>
    <scope>IDENTIFICATION BY MASS SPECTROMETRY [LARGE SCALE ANALYSIS]</scope>
</reference>
<organism>
    <name type="scientific">Homo sapiens</name>
    <name type="common">Human</name>
    <dbReference type="NCBI Taxonomy" id="9606"/>
    <lineage>
        <taxon>Eukaryota</taxon>
        <taxon>Metazoa</taxon>
        <taxon>Chordata</taxon>
        <taxon>Craniata</taxon>
        <taxon>Vertebrata</taxon>
        <taxon>Euteleostomi</taxon>
        <taxon>Mammalia</taxon>
        <taxon>Eutheria</taxon>
        <taxon>Euarchontoglires</taxon>
        <taxon>Primates</taxon>
        <taxon>Haplorrhini</taxon>
        <taxon>Catarrhini</taxon>
        <taxon>Hominidae</taxon>
        <taxon>Homo</taxon>
    </lineage>
</organism>
<accession>Q9HBL7</accession>
<accession>B2R6W0</accession>
<accession>Q9NZ44</accession>
<evidence type="ECO:0000250" key="1"/>
<evidence type="ECO:0000255" key="2"/>
<evidence type="ECO:0000269" key="3">
    <source>
    </source>
</evidence>
<evidence type="ECO:0000269" key="4">
    <source>
    </source>
</evidence>
<evidence type="ECO:0000305" key="5"/>
<sequence length="147" mass="17201">MGFIFSKSMNESMKNQKEFMLMNARLQLERQLIMQSEMRERQMAMQIAWSREFLKYFGTFFGLAAISLTAGAIKKKKPAFLVPIVPLSFILTYQYDLGYGTLLERMKGEAEDILETEKSKLQLPRGMITFESIEKARKEQSRFFIDK</sequence>
<protein>
    <recommendedName>
        <fullName>Plasminogen receptor (KT)</fullName>
        <shortName>Plg-R(KT)</shortName>
    </recommendedName>
</protein>